<proteinExistence type="inferred from homology"/>
<reference key="1">
    <citation type="journal article" date="2006" name="Proc. Natl. Acad. Sci. U.S.A.">
        <title>Comparative genomics of the lactic acid bacteria.</title>
        <authorList>
            <person name="Makarova K.S."/>
            <person name="Slesarev A."/>
            <person name="Wolf Y.I."/>
            <person name="Sorokin A."/>
            <person name="Mirkin B."/>
            <person name="Koonin E.V."/>
            <person name="Pavlov A."/>
            <person name="Pavlova N."/>
            <person name="Karamychev V."/>
            <person name="Polouchine N."/>
            <person name="Shakhova V."/>
            <person name="Grigoriev I."/>
            <person name="Lou Y."/>
            <person name="Rohksar D."/>
            <person name="Lucas S."/>
            <person name="Huang K."/>
            <person name="Goodstein D.M."/>
            <person name="Hawkins T."/>
            <person name="Plengvidhya V."/>
            <person name="Welker D."/>
            <person name="Hughes J."/>
            <person name="Goh Y."/>
            <person name="Benson A."/>
            <person name="Baldwin K."/>
            <person name="Lee J.-H."/>
            <person name="Diaz-Muniz I."/>
            <person name="Dosti B."/>
            <person name="Smeianov V."/>
            <person name="Wechter W."/>
            <person name="Barabote R."/>
            <person name="Lorca G."/>
            <person name="Altermann E."/>
            <person name="Barrangou R."/>
            <person name="Ganesan B."/>
            <person name="Xie Y."/>
            <person name="Rawsthorne H."/>
            <person name="Tamir D."/>
            <person name="Parker C."/>
            <person name="Breidt F."/>
            <person name="Broadbent J.R."/>
            <person name="Hutkins R."/>
            <person name="O'Sullivan D."/>
            <person name="Steele J."/>
            <person name="Unlu G."/>
            <person name="Saier M.H. Jr."/>
            <person name="Klaenhammer T."/>
            <person name="Richardson P."/>
            <person name="Kozyavkin S."/>
            <person name="Weimer B.C."/>
            <person name="Mills D.A."/>
        </authorList>
    </citation>
    <scope>NUCLEOTIDE SEQUENCE [LARGE SCALE GENOMIC DNA]</scope>
    <source>
        <strain>ATCC 8293 / DSM 20343 / BCRC 11652 / CCM 1803 / JCM 6124 / NCDO 523 / NBRC 100496 / NCIMB 8023 / NCTC 12954 / NRRL B-1118 / 37Y</strain>
    </source>
</reference>
<keyword id="KW-0054">Arabinose catabolism</keyword>
<keyword id="KW-0119">Carbohydrate metabolism</keyword>
<keyword id="KW-0413">Isomerase</keyword>
<keyword id="KW-0464">Manganese</keyword>
<keyword id="KW-0479">Metal-binding</keyword>
<keyword id="KW-1185">Reference proteome</keyword>
<feature type="chain" id="PRO_0000312612" description="L-arabinose isomerase">
    <location>
        <begin position="1"/>
        <end position="474"/>
    </location>
</feature>
<feature type="binding site" evidence="1">
    <location>
        <position position="306"/>
    </location>
    <ligand>
        <name>Mn(2+)</name>
        <dbReference type="ChEBI" id="CHEBI:29035"/>
    </ligand>
</feature>
<feature type="binding site" evidence="1">
    <location>
        <position position="331"/>
    </location>
    <ligand>
        <name>Mn(2+)</name>
        <dbReference type="ChEBI" id="CHEBI:29035"/>
    </ligand>
</feature>
<feature type="binding site" evidence="1">
    <location>
        <position position="348"/>
    </location>
    <ligand>
        <name>Mn(2+)</name>
        <dbReference type="ChEBI" id="CHEBI:29035"/>
    </ligand>
</feature>
<feature type="binding site" evidence="1">
    <location>
        <position position="447"/>
    </location>
    <ligand>
        <name>Mn(2+)</name>
        <dbReference type="ChEBI" id="CHEBI:29035"/>
    </ligand>
</feature>
<accession>Q03XW2</accession>
<sequence>MADIKDYKFWFVTGSQFLYGPEVLKQVEEDSKKIIEKLNESGNLPYPIEFKTVGVTAENITEAMKEANYDDSVAGVITWAHTFSPAKNWIRGTQLLNKPLLHLATQMLNNIPYDSIDFDYMNLNQSAHGDREYAFINARLRLNNKIVFGHWADEAVQVQIGKWMDVAVAYEESFKIKVVTFADKMRNVAVTDGDKIEAQIKFGWTVDYWGVGDLVTYVNAIDDADIDNLYIELQDKYDFVAGQNDSEKYEHNVKYQLREYLGIKRFLTDKGYSAFTTNFEDLVGLEQLPGLAAQLLMADGFGFAGEGDWKTAALTRLLKIVSHNQATAFMEDYTLDLRQGHEAILGSHMLEVDPTIASDKPRVEVHPLGIGGKEDPARLVFSGRTGDAVDVTISDFGDEFKLISYDVTGNKPEAETPYLPVAKQLWTPKAGLKAGAEGWLTVGGGHHTTLSFSVDSEQLTDLANLFGVTYVDIK</sequence>
<gene>
    <name evidence="1" type="primary">araA</name>
    <name type="ordered locus">LEUM_0852</name>
</gene>
<evidence type="ECO:0000255" key="1">
    <source>
        <dbReference type="HAMAP-Rule" id="MF_00519"/>
    </source>
</evidence>
<comment type="function">
    <text evidence="1">Catalyzes the conversion of L-arabinose to L-ribulose.</text>
</comment>
<comment type="catalytic activity">
    <reaction evidence="1">
        <text>beta-L-arabinopyranose = L-ribulose</text>
        <dbReference type="Rhea" id="RHEA:14821"/>
        <dbReference type="ChEBI" id="CHEBI:16880"/>
        <dbReference type="ChEBI" id="CHEBI:40886"/>
        <dbReference type="EC" id="5.3.1.4"/>
    </reaction>
</comment>
<comment type="cofactor">
    <cofactor evidence="1">
        <name>Mn(2+)</name>
        <dbReference type="ChEBI" id="CHEBI:29035"/>
    </cofactor>
    <text evidence="1">Binds 1 Mn(2+) ion per subunit.</text>
</comment>
<comment type="pathway">
    <text evidence="1">Carbohydrate degradation; L-arabinose degradation via L-ribulose; D-xylulose 5-phosphate from L-arabinose (bacterial route): step 1/3.</text>
</comment>
<comment type="similarity">
    <text evidence="1">Belongs to the arabinose isomerase family.</text>
</comment>
<protein>
    <recommendedName>
        <fullName evidence="1">L-arabinose isomerase</fullName>
        <ecNumber evidence="1">5.3.1.4</ecNumber>
    </recommendedName>
</protein>
<name>ARAA_LEUMM</name>
<dbReference type="EC" id="5.3.1.4" evidence="1"/>
<dbReference type="EMBL" id="CP000414">
    <property type="protein sequence ID" value="ABJ61960.1"/>
    <property type="molecule type" value="Genomic_DNA"/>
</dbReference>
<dbReference type="RefSeq" id="WP_011679623.1">
    <property type="nucleotide sequence ID" value="NC_008531.1"/>
</dbReference>
<dbReference type="SMR" id="Q03XW2"/>
<dbReference type="EnsemblBacteria" id="ABJ61960">
    <property type="protein sequence ID" value="ABJ61960"/>
    <property type="gene ID" value="LEUM_0852"/>
</dbReference>
<dbReference type="GeneID" id="29577519"/>
<dbReference type="KEGG" id="lme:LEUM_0852"/>
<dbReference type="eggNOG" id="COG2160">
    <property type="taxonomic scope" value="Bacteria"/>
</dbReference>
<dbReference type="HOGENOM" id="CLU_045663_0_0_9"/>
<dbReference type="UniPathway" id="UPA00145">
    <property type="reaction ID" value="UER00565"/>
</dbReference>
<dbReference type="Proteomes" id="UP000000362">
    <property type="component" value="Chromosome"/>
</dbReference>
<dbReference type="GO" id="GO:0005829">
    <property type="term" value="C:cytosol"/>
    <property type="evidence" value="ECO:0007669"/>
    <property type="project" value="TreeGrafter"/>
</dbReference>
<dbReference type="GO" id="GO:0008733">
    <property type="term" value="F:L-arabinose isomerase activity"/>
    <property type="evidence" value="ECO:0007669"/>
    <property type="project" value="UniProtKB-UniRule"/>
</dbReference>
<dbReference type="GO" id="GO:0030145">
    <property type="term" value="F:manganese ion binding"/>
    <property type="evidence" value="ECO:0007669"/>
    <property type="project" value="UniProtKB-UniRule"/>
</dbReference>
<dbReference type="GO" id="GO:0019569">
    <property type="term" value="P:L-arabinose catabolic process to xylulose 5-phosphate"/>
    <property type="evidence" value="ECO:0007669"/>
    <property type="project" value="UniProtKB-UniRule"/>
</dbReference>
<dbReference type="Gene3D" id="3.40.50.10940">
    <property type="match status" value="1"/>
</dbReference>
<dbReference type="HAMAP" id="MF_00519">
    <property type="entry name" value="Arabinose_Isome"/>
    <property type="match status" value="1"/>
</dbReference>
<dbReference type="InterPro" id="IPR024664">
    <property type="entry name" value="Ara_Isoase_C"/>
</dbReference>
<dbReference type="InterPro" id="IPR055390">
    <property type="entry name" value="AraA_central"/>
</dbReference>
<dbReference type="InterPro" id="IPR055389">
    <property type="entry name" value="AraA_N"/>
</dbReference>
<dbReference type="InterPro" id="IPR038583">
    <property type="entry name" value="AraA_N_sf"/>
</dbReference>
<dbReference type="InterPro" id="IPR004216">
    <property type="entry name" value="Fuc/Ara_isomerase_C"/>
</dbReference>
<dbReference type="InterPro" id="IPR009015">
    <property type="entry name" value="Fucose_isomerase_N/cen_sf"/>
</dbReference>
<dbReference type="InterPro" id="IPR003762">
    <property type="entry name" value="Lara_isomerase"/>
</dbReference>
<dbReference type="NCBIfam" id="NF002795">
    <property type="entry name" value="PRK02929.1"/>
    <property type="match status" value="1"/>
</dbReference>
<dbReference type="PANTHER" id="PTHR38464">
    <property type="entry name" value="L-ARABINOSE ISOMERASE"/>
    <property type="match status" value="1"/>
</dbReference>
<dbReference type="PANTHER" id="PTHR38464:SF1">
    <property type="entry name" value="L-ARABINOSE ISOMERASE"/>
    <property type="match status" value="1"/>
</dbReference>
<dbReference type="Pfam" id="PF24856">
    <property type="entry name" value="AraA_central"/>
    <property type="match status" value="1"/>
</dbReference>
<dbReference type="Pfam" id="PF02610">
    <property type="entry name" value="AraA_N"/>
    <property type="match status" value="1"/>
</dbReference>
<dbReference type="Pfam" id="PF11762">
    <property type="entry name" value="Arabinose_Iso_C"/>
    <property type="match status" value="1"/>
</dbReference>
<dbReference type="PIRSF" id="PIRSF001478">
    <property type="entry name" value="L-ara_isomerase"/>
    <property type="match status" value="1"/>
</dbReference>
<dbReference type="SUPFAM" id="SSF50443">
    <property type="entry name" value="FucI/AraA C-terminal domain-like"/>
    <property type="match status" value="1"/>
</dbReference>
<dbReference type="SUPFAM" id="SSF53743">
    <property type="entry name" value="FucI/AraA N-terminal and middle domains"/>
    <property type="match status" value="1"/>
</dbReference>
<organism>
    <name type="scientific">Leuconostoc mesenteroides subsp. mesenteroides (strain ATCC 8293 / DSM 20343 / BCRC 11652 / CCM 1803 / JCM 6124 / NCDO 523 / NBRC 100496 / NCIMB 8023 / NCTC 12954 / NRRL B-1118 / 37Y)</name>
    <dbReference type="NCBI Taxonomy" id="203120"/>
    <lineage>
        <taxon>Bacteria</taxon>
        <taxon>Bacillati</taxon>
        <taxon>Bacillota</taxon>
        <taxon>Bacilli</taxon>
        <taxon>Lactobacillales</taxon>
        <taxon>Lactobacillaceae</taxon>
        <taxon>Leuconostoc</taxon>
    </lineage>
</organism>